<evidence type="ECO:0000250" key="1">
    <source>
        <dbReference type="UniProtKB" id="P53567"/>
    </source>
</evidence>
<evidence type="ECO:0000250" key="2">
    <source>
        <dbReference type="UniProtKB" id="P53568"/>
    </source>
</evidence>
<evidence type="ECO:0000255" key="3">
    <source>
        <dbReference type="PROSITE-ProRule" id="PRU00978"/>
    </source>
</evidence>
<evidence type="ECO:0000256" key="4">
    <source>
        <dbReference type="SAM" id="MobiDB-lite"/>
    </source>
</evidence>
<evidence type="ECO:0000269" key="5">
    <source>
    </source>
</evidence>
<evidence type="ECO:0000305" key="6"/>
<evidence type="ECO:0000305" key="7">
    <source>
    </source>
</evidence>
<sequence length="150" mass="16388">MSKLSQPASTAGVNGISVIHTQAHASGLQQVPQLVPAGPGGGGKAVPPSKQSKKSSPMDRNSDEYRQRRERNNMAVKKSRLKSKQKAQDTLQRVNQLKEENERLEAKIKLLTKELSVLKDLFLEHAHNLADNVQPISTETTVANSDNTGQ</sequence>
<keyword id="KW-0010">Activator</keyword>
<keyword id="KW-0238">DNA-binding</keyword>
<keyword id="KW-1017">Isopeptide bond</keyword>
<keyword id="KW-0539">Nucleus</keyword>
<keyword id="KW-1185">Reference proteome</keyword>
<keyword id="KW-0804">Transcription</keyword>
<keyword id="KW-0805">Transcription regulation</keyword>
<keyword id="KW-0832">Ubl conjugation</keyword>
<gene>
    <name type="primary">Cebpg</name>
</gene>
<feature type="chain" id="PRO_0000076630" description="CCAAT/enhancer-binding protein gamma">
    <location>
        <begin position="1"/>
        <end position="150"/>
    </location>
</feature>
<feature type="domain" description="bZIP" evidence="3">
    <location>
        <begin position="62"/>
        <end position="125"/>
    </location>
</feature>
<feature type="region of interest" description="Disordered" evidence="4">
    <location>
        <begin position="27"/>
        <end position="94"/>
    </location>
</feature>
<feature type="region of interest" description="Basic motif" evidence="3">
    <location>
        <begin position="66"/>
        <end position="93"/>
    </location>
</feature>
<feature type="region of interest" description="Leucine-zipper" evidence="3">
    <location>
        <begin position="97"/>
        <end position="118"/>
    </location>
</feature>
<feature type="compositionally biased region" description="Low complexity" evidence="4">
    <location>
        <begin position="28"/>
        <end position="37"/>
    </location>
</feature>
<feature type="compositionally biased region" description="Basic and acidic residues" evidence="4">
    <location>
        <begin position="56"/>
        <end position="72"/>
    </location>
</feature>
<feature type="cross-link" description="Glycyl lysine isopeptide (Lys-Gly) (interchain with G-Cter in SUMO2)" evidence="1">
    <location>
        <position position="3"/>
    </location>
</feature>
<dbReference type="EMBL" id="X64403">
    <property type="protein sequence ID" value="CAA45745.1"/>
    <property type="status" value="ALT_INIT"/>
    <property type="molecule type" value="mRNA"/>
</dbReference>
<dbReference type="PIR" id="S26300">
    <property type="entry name" value="S26300"/>
</dbReference>
<dbReference type="RefSeq" id="NP_036963.1">
    <property type="nucleotide sequence ID" value="NM_012831.1"/>
</dbReference>
<dbReference type="RefSeq" id="XP_038957466.1">
    <property type="nucleotide sequence ID" value="XM_039101538.2"/>
</dbReference>
<dbReference type="SMR" id="P26801"/>
<dbReference type="BioGRID" id="247340">
    <property type="interactions" value="3"/>
</dbReference>
<dbReference type="FunCoup" id="P26801">
    <property type="interactions" value="359"/>
</dbReference>
<dbReference type="STRING" id="10116.ENSRNOP00000028703"/>
<dbReference type="iPTMnet" id="P26801"/>
<dbReference type="PhosphoSitePlus" id="P26801"/>
<dbReference type="PaxDb" id="10116-ENSRNOP00000028703"/>
<dbReference type="GeneID" id="25301"/>
<dbReference type="KEGG" id="rno:25301"/>
<dbReference type="UCSC" id="RGD:2330">
    <property type="organism name" value="rat"/>
</dbReference>
<dbReference type="AGR" id="RGD:2330"/>
<dbReference type="CTD" id="1054"/>
<dbReference type="RGD" id="2330">
    <property type="gene designation" value="Cebpg"/>
</dbReference>
<dbReference type="VEuPathDB" id="HostDB:ENSRNOG00000021144"/>
<dbReference type="eggNOG" id="KOG3119">
    <property type="taxonomic scope" value="Eukaryota"/>
</dbReference>
<dbReference type="HOGENOM" id="CLU_146813_0_0_1"/>
<dbReference type="InParanoid" id="P26801"/>
<dbReference type="OrthoDB" id="88716at9989"/>
<dbReference type="PhylomeDB" id="P26801"/>
<dbReference type="TreeFam" id="TF105009"/>
<dbReference type="PRO" id="PR:P26801"/>
<dbReference type="Proteomes" id="UP000002494">
    <property type="component" value="Chromosome 1"/>
</dbReference>
<dbReference type="Bgee" id="ENSRNOG00000021144">
    <property type="expression patterns" value="Expressed in duodenum and 20 other cell types or tissues"/>
</dbReference>
<dbReference type="ExpressionAtlas" id="P26801">
    <property type="expression patterns" value="baseline and differential"/>
</dbReference>
<dbReference type="GO" id="GO:0005634">
    <property type="term" value="C:nucleus"/>
    <property type="evidence" value="ECO:0000250"/>
    <property type="project" value="UniProtKB"/>
</dbReference>
<dbReference type="GO" id="GO:0090575">
    <property type="term" value="C:RNA polymerase II transcription regulator complex"/>
    <property type="evidence" value="ECO:0000266"/>
    <property type="project" value="RGD"/>
</dbReference>
<dbReference type="GO" id="GO:0003677">
    <property type="term" value="F:DNA binding"/>
    <property type="evidence" value="ECO:0000314"/>
    <property type="project" value="UniProtKB"/>
</dbReference>
<dbReference type="GO" id="GO:0001228">
    <property type="term" value="F:DNA-binding transcription activator activity, RNA polymerase II-specific"/>
    <property type="evidence" value="ECO:0000266"/>
    <property type="project" value="RGD"/>
</dbReference>
<dbReference type="GO" id="GO:0000981">
    <property type="term" value="F:DNA-binding transcription factor activity, RNA polymerase II-specific"/>
    <property type="evidence" value="ECO:0000318"/>
    <property type="project" value="GO_Central"/>
</dbReference>
<dbReference type="GO" id="GO:0140297">
    <property type="term" value="F:DNA-binding transcription factor binding"/>
    <property type="evidence" value="ECO:0000250"/>
    <property type="project" value="UniProtKB"/>
</dbReference>
<dbReference type="GO" id="GO:0003690">
    <property type="term" value="F:double-stranded DNA binding"/>
    <property type="evidence" value="ECO:0000314"/>
    <property type="project" value="RGD"/>
</dbReference>
<dbReference type="GO" id="GO:0044877">
    <property type="term" value="F:protein-containing complex binding"/>
    <property type="evidence" value="ECO:0000314"/>
    <property type="project" value="RGD"/>
</dbReference>
<dbReference type="GO" id="GO:0000978">
    <property type="term" value="F:RNA polymerase II cis-regulatory region sequence-specific DNA binding"/>
    <property type="evidence" value="ECO:0000266"/>
    <property type="project" value="RGD"/>
</dbReference>
<dbReference type="GO" id="GO:0044377">
    <property type="term" value="F:RNA polymerase II cis-regulatory region sequence-specific DNA binding, bending"/>
    <property type="evidence" value="ECO:0000314"/>
    <property type="project" value="RGD"/>
</dbReference>
<dbReference type="GO" id="GO:0043565">
    <property type="term" value="F:sequence-specific DNA binding"/>
    <property type="evidence" value="ECO:0000250"/>
    <property type="project" value="UniProtKB"/>
</dbReference>
<dbReference type="GO" id="GO:1990837">
    <property type="term" value="F:sequence-specific double-stranded DNA binding"/>
    <property type="evidence" value="ECO:0000266"/>
    <property type="project" value="RGD"/>
</dbReference>
<dbReference type="GO" id="GO:0030183">
    <property type="term" value="P:B cell differentiation"/>
    <property type="evidence" value="ECO:0000250"/>
    <property type="project" value="UniProtKB"/>
</dbReference>
<dbReference type="GO" id="GO:0006351">
    <property type="term" value="P:DNA-templated transcription"/>
    <property type="evidence" value="ECO:0007669"/>
    <property type="project" value="InterPro"/>
</dbReference>
<dbReference type="GO" id="GO:0043353">
    <property type="term" value="P:enucleate erythrocyte differentiation"/>
    <property type="evidence" value="ECO:0000250"/>
    <property type="project" value="UniProtKB"/>
</dbReference>
<dbReference type="GO" id="GO:0006955">
    <property type="term" value="P:immune response"/>
    <property type="evidence" value="ECO:0000250"/>
    <property type="project" value="UniProtKB"/>
</dbReference>
<dbReference type="GO" id="GO:0001889">
    <property type="term" value="P:liver development"/>
    <property type="evidence" value="ECO:0000270"/>
    <property type="project" value="UniProtKB"/>
</dbReference>
<dbReference type="GO" id="GO:0016071">
    <property type="term" value="P:mRNA metabolic process"/>
    <property type="evidence" value="ECO:0000266"/>
    <property type="project" value="RGD"/>
</dbReference>
<dbReference type="GO" id="GO:0042267">
    <property type="term" value="P:natural killer cell mediated cytotoxicity"/>
    <property type="evidence" value="ECO:0000250"/>
    <property type="project" value="UniProtKB"/>
</dbReference>
<dbReference type="GO" id="GO:0043433">
    <property type="term" value="P:negative regulation of DNA-binding transcription factor activity"/>
    <property type="evidence" value="ECO:0000250"/>
    <property type="project" value="UniProtKB"/>
</dbReference>
<dbReference type="GO" id="GO:0045739">
    <property type="term" value="P:positive regulation of DNA repair"/>
    <property type="evidence" value="ECO:0000250"/>
    <property type="project" value="UniProtKB"/>
</dbReference>
<dbReference type="GO" id="GO:0045944">
    <property type="term" value="P:positive regulation of transcription by RNA polymerase II"/>
    <property type="evidence" value="ECO:0000266"/>
    <property type="project" value="RGD"/>
</dbReference>
<dbReference type="GO" id="GO:0032729">
    <property type="term" value="P:positive regulation of type II interferon production"/>
    <property type="evidence" value="ECO:0000250"/>
    <property type="project" value="UniProtKB"/>
</dbReference>
<dbReference type="GO" id="GO:0006357">
    <property type="term" value="P:regulation of transcription by RNA polymerase II"/>
    <property type="evidence" value="ECO:0000270"/>
    <property type="project" value="RGD"/>
</dbReference>
<dbReference type="CDD" id="cd14713">
    <property type="entry name" value="bZIP_CEBPG"/>
    <property type="match status" value="1"/>
</dbReference>
<dbReference type="FunFam" id="1.20.5.170:FF:000055">
    <property type="entry name" value="CCAAT/enhancer-binding protein gamma"/>
    <property type="match status" value="1"/>
</dbReference>
<dbReference type="Gene3D" id="1.20.5.170">
    <property type="match status" value="1"/>
</dbReference>
<dbReference type="InterPro" id="IPR004827">
    <property type="entry name" value="bZIP"/>
</dbReference>
<dbReference type="InterPro" id="IPR046347">
    <property type="entry name" value="bZIP_sf"/>
</dbReference>
<dbReference type="InterPro" id="IPR031106">
    <property type="entry name" value="C/EBP"/>
</dbReference>
<dbReference type="PANTHER" id="PTHR23334">
    <property type="entry name" value="CCAAT/ENHANCER BINDING PROTEIN"/>
    <property type="match status" value="1"/>
</dbReference>
<dbReference type="PANTHER" id="PTHR23334:SF69">
    <property type="entry name" value="CCAAT_ENHANCER-BINDING PROTEIN GAMMA"/>
    <property type="match status" value="1"/>
</dbReference>
<dbReference type="Pfam" id="PF07716">
    <property type="entry name" value="bZIP_2"/>
    <property type="match status" value="1"/>
</dbReference>
<dbReference type="SMART" id="SM00338">
    <property type="entry name" value="BRLZ"/>
    <property type="match status" value="1"/>
</dbReference>
<dbReference type="SUPFAM" id="SSF57959">
    <property type="entry name" value="Leucine zipper domain"/>
    <property type="match status" value="1"/>
</dbReference>
<dbReference type="PROSITE" id="PS50217">
    <property type="entry name" value="BZIP"/>
    <property type="match status" value="1"/>
</dbReference>
<comment type="function">
    <text evidence="1 2 5">Transcription factor that binds to the promoter and the enhancer regions of target genes. Binds to the promoter and the enhancer of the alpha-1-fetoprotein gene (PubMed:1377818). Binds to the enhancer element PRE-I (positive regulatory element-I) of the IL-4 gene (By similarity). Binds to the promoter and the enhancer of the immunoglobulin heavy chain. Binds to GPE1, a cis-acting element in the G-CSF gene promoter (By similarity).</text>
</comment>
<comment type="subunit">
    <text evidence="2 5">Binds DNA as a dimer and can form stable heterodimers with CEBPA and CEBPB (PubMed:1377818). Interacts with ZNF638; this interaction increases transcriptional activation (By similarity).</text>
</comment>
<comment type="subcellular location">
    <subcellularLocation>
        <location evidence="7">Nucleus</location>
    </subcellularLocation>
</comment>
<comment type="similarity">
    <text evidence="6">Belongs to the bZIP family. C/EBP subfamily.</text>
</comment>
<comment type="sequence caution" evidence="6">
    <conflict type="erroneous initiation">
        <sequence resource="EMBL-CDS" id="CAA45745"/>
    </conflict>
</comment>
<proteinExistence type="evidence at protein level"/>
<organism>
    <name type="scientific">Rattus norvegicus</name>
    <name type="common">Rat</name>
    <dbReference type="NCBI Taxonomy" id="10116"/>
    <lineage>
        <taxon>Eukaryota</taxon>
        <taxon>Metazoa</taxon>
        <taxon>Chordata</taxon>
        <taxon>Craniata</taxon>
        <taxon>Vertebrata</taxon>
        <taxon>Euteleostomi</taxon>
        <taxon>Mammalia</taxon>
        <taxon>Eutheria</taxon>
        <taxon>Euarchontoglires</taxon>
        <taxon>Glires</taxon>
        <taxon>Rodentia</taxon>
        <taxon>Myomorpha</taxon>
        <taxon>Muroidea</taxon>
        <taxon>Muridae</taxon>
        <taxon>Murinae</taxon>
        <taxon>Rattus</taxon>
    </lineage>
</organism>
<accession>P26801</accession>
<reference key="1">
    <citation type="journal article" date="1992" name="Nucleic Acids Res.">
        <title>Molecular cloning of two C/EBP-related proteins that bind to the promoter and the enhancer of the alpha 1-fetoprotein gene. Further analysis of C/EBP beta and C/EBP gamma.</title>
        <authorList>
            <person name="Thomassin H."/>
            <person name="Hamel D."/>
            <person name="Bernier D."/>
            <person name="Guertin M."/>
            <person name="Belanger L."/>
        </authorList>
    </citation>
    <scope>NUCLEOTIDE SEQUENCE [MRNA]</scope>
    <scope>FUNCTION</scope>
    <scope>SUBUNIT</scope>
    <source>
        <strain>Sprague-Dawley</strain>
        <tissue>Liver</tissue>
    </source>
</reference>
<name>CEBPG_RAT</name>
<protein>
    <recommendedName>
        <fullName>CCAAT/enhancer-binding protein gamma</fullName>
        <shortName>C/EBP gamma</shortName>
    </recommendedName>
</protein>